<dbReference type="EC" id="7.6.2.10" evidence="1"/>
<dbReference type="EMBL" id="AM040265">
    <property type="protein sequence ID" value="CAJ12748.1"/>
    <property type="molecule type" value="Genomic_DNA"/>
</dbReference>
<dbReference type="RefSeq" id="WP_002970644.1">
    <property type="nucleotide sequence ID" value="NZ_KN046823.1"/>
</dbReference>
<dbReference type="SMR" id="Q2YKR8"/>
<dbReference type="STRING" id="359391.BAB2_0582"/>
<dbReference type="KEGG" id="bmf:BAB2_0582"/>
<dbReference type="PATRIC" id="fig|359391.11.peg.2767"/>
<dbReference type="HOGENOM" id="CLU_000604_1_1_5"/>
<dbReference type="PhylomeDB" id="Q2YKR8"/>
<dbReference type="Proteomes" id="UP000002719">
    <property type="component" value="Chromosome II"/>
</dbReference>
<dbReference type="GO" id="GO:0055052">
    <property type="term" value="C:ATP-binding cassette (ABC) transporter complex, substrate-binding subunit-containing"/>
    <property type="evidence" value="ECO:0007669"/>
    <property type="project" value="TreeGrafter"/>
</dbReference>
<dbReference type="GO" id="GO:0015430">
    <property type="term" value="F:ABC-type glycerol-3-phosphate transporter activity"/>
    <property type="evidence" value="ECO:0007669"/>
    <property type="project" value="UniProtKB-EC"/>
</dbReference>
<dbReference type="GO" id="GO:0005524">
    <property type="term" value="F:ATP binding"/>
    <property type="evidence" value="ECO:0007669"/>
    <property type="project" value="UniProtKB-KW"/>
</dbReference>
<dbReference type="GO" id="GO:0016887">
    <property type="term" value="F:ATP hydrolysis activity"/>
    <property type="evidence" value="ECO:0007669"/>
    <property type="project" value="InterPro"/>
</dbReference>
<dbReference type="GO" id="GO:0008643">
    <property type="term" value="P:carbohydrate transport"/>
    <property type="evidence" value="ECO:0007669"/>
    <property type="project" value="InterPro"/>
</dbReference>
<dbReference type="GO" id="GO:0001407">
    <property type="term" value="P:glycerophosphodiester transmembrane transport"/>
    <property type="evidence" value="ECO:0007669"/>
    <property type="project" value="TreeGrafter"/>
</dbReference>
<dbReference type="CDD" id="cd03301">
    <property type="entry name" value="ABC_MalK_N"/>
    <property type="match status" value="1"/>
</dbReference>
<dbReference type="FunFam" id="3.40.50.300:FF:000042">
    <property type="entry name" value="Maltose/maltodextrin ABC transporter, ATP-binding protein"/>
    <property type="match status" value="1"/>
</dbReference>
<dbReference type="Gene3D" id="2.40.50.100">
    <property type="match status" value="1"/>
</dbReference>
<dbReference type="Gene3D" id="2.40.50.140">
    <property type="entry name" value="Nucleic acid-binding proteins"/>
    <property type="match status" value="1"/>
</dbReference>
<dbReference type="Gene3D" id="3.40.50.300">
    <property type="entry name" value="P-loop containing nucleotide triphosphate hydrolases"/>
    <property type="match status" value="1"/>
</dbReference>
<dbReference type="InterPro" id="IPR003593">
    <property type="entry name" value="AAA+_ATPase"/>
</dbReference>
<dbReference type="InterPro" id="IPR003439">
    <property type="entry name" value="ABC_transporter-like_ATP-bd"/>
</dbReference>
<dbReference type="InterPro" id="IPR017871">
    <property type="entry name" value="ABC_transporter-like_CS"/>
</dbReference>
<dbReference type="InterPro" id="IPR015855">
    <property type="entry name" value="ABC_transpr_MalK-like"/>
</dbReference>
<dbReference type="InterPro" id="IPR047641">
    <property type="entry name" value="ABC_transpr_MalK/UgpC-like"/>
</dbReference>
<dbReference type="InterPro" id="IPR008995">
    <property type="entry name" value="Mo/tungstate-bd_C_term_dom"/>
</dbReference>
<dbReference type="InterPro" id="IPR012340">
    <property type="entry name" value="NA-bd_OB-fold"/>
</dbReference>
<dbReference type="InterPro" id="IPR027417">
    <property type="entry name" value="P-loop_NTPase"/>
</dbReference>
<dbReference type="InterPro" id="IPR013611">
    <property type="entry name" value="Transp-assoc_OB_typ2"/>
</dbReference>
<dbReference type="NCBIfam" id="NF008653">
    <property type="entry name" value="PRK11650.1"/>
    <property type="match status" value="1"/>
</dbReference>
<dbReference type="PANTHER" id="PTHR43875">
    <property type="entry name" value="MALTODEXTRIN IMPORT ATP-BINDING PROTEIN MSMX"/>
    <property type="match status" value="1"/>
</dbReference>
<dbReference type="PANTHER" id="PTHR43875:SF12">
    <property type="entry name" value="SN-GLYCEROL-3-PHOSPHATE IMPORT ATP-BINDING PROTEIN UGPC"/>
    <property type="match status" value="1"/>
</dbReference>
<dbReference type="Pfam" id="PF00005">
    <property type="entry name" value="ABC_tran"/>
    <property type="match status" value="1"/>
</dbReference>
<dbReference type="Pfam" id="PF08402">
    <property type="entry name" value="TOBE_2"/>
    <property type="match status" value="1"/>
</dbReference>
<dbReference type="SMART" id="SM00382">
    <property type="entry name" value="AAA"/>
    <property type="match status" value="1"/>
</dbReference>
<dbReference type="SUPFAM" id="SSF50331">
    <property type="entry name" value="MOP-like"/>
    <property type="match status" value="1"/>
</dbReference>
<dbReference type="SUPFAM" id="SSF52540">
    <property type="entry name" value="P-loop containing nucleoside triphosphate hydrolases"/>
    <property type="match status" value="1"/>
</dbReference>
<dbReference type="PROSITE" id="PS00211">
    <property type="entry name" value="ABC_TRANSPORTER_1"/>
    <property type="match status" value="1"/>
</dbReference>
<dbReference type="PROSITE" id="PS50893">
    <property type="entry name" value="ABC_TRANSPORTER_2"/>
    <property type="match status" value="1"/>
</dbReference>
<dbReference type="PROSITE" id="PS51315">
    <property type="entry name" value="UGPC"/>
    <property type="match status" value="1"/>
</dbReference>
<protein>
    <recommendedName>
        <fullName evidence="1">sn-glycerol-3-phosphate import ATP-binding protein UgpC</fullName>
        <ecNumber evidence="1">7.6.2.10</ecNumber>
    </recommendedName>
</protein>
<reference key="1">
    <citation type="journal article" date="2005" name="Infect. Immun.">
        <title>Whole-genome analyses of speciation events in pathogenic Brucellae.</title>
        <authorList>
            <person name="Chain P.S."/>
            <person name="Comerci D.J."/>
            <person name="Tolmasky M.E."/>
            <person name="Larimer F.W."/>
            <person name="Malfatti S.A."/>
            <person name="Vergez L.M."/>
            <person name="Aguero F."/>
            <person name="Land M.L."/>
            <person name="Ugalde R.A."/>
            <person name="Garcia E."/>
        </authorList>
    </citation>
    <scope>NUCLEOTIDE SEQUENCE [LARGE SCALE GENOMIC DNA]</scope>
    <source>
        <strain>2308</strain>
    </source>
</reference>
<proteinExistence type="inferred from homology"/>
<organism>
    <name type="scientific">Brucella abortus (strain 2308)</name>
    <dbReference type="NCBI Taxonomy" id="359391"/>
    <lineage>
        <taxon>Bacteria</taxon>
        <taxon>Pseudomonadati</taxon>
        <taxon>Pseudomonadota</taxon>
        <taxon>Alphaproteobacteria</taxon>
        <taxon>Hyphomicrobiales</taxon>
        <taxon>Brucellaceae</taxon>
        <taxon>Brucella/Ochrobactrum group</taxon>
        <taxon>Brucella</taxon>
    </lineage>
</organism>
<evidence type="ECO:0000255" key="1">
    <source>
        <dbReference type="HAMAP-Rule" id="MF_01727"/>
    </source>
</evidence>
<feature type="chain" id="PRO_0000289735" description="sn-glycerol-3-phosphate import ATP-binding protein UgpC">
    <location>
        <begin position="1"/>
        <end position="351"/>
    </location>
</feature>
<feature type="domain" description="ABC transporter" evidence="1">
    <location>
        <begin position="4"/>
        <end position="235"/>
    </location>
</feature>
<feature type="binding site" evidence="1">
    <location>
        <begin position="37"/>
        <end position="44"/>
    </location>
    <ligand>
        <name>ATP</name>
        <dbReference type="ChEBI" id="CHEBI:30616"/>
    </ligand>
</feature>
<accession>Q2YKR8</accession>
<keyword id="KW-0067">ATP-binding</keyword>
<keyword id="KW-0997">Cell inner membrane</keyword>
<keyword id="KW-1003">Cell membrane</keyword>
<keyword id="KW-0472">Membrane</keyword>
<keyword id="KW-0547">Nucleotide-binding</keyword>
<keyword id="KW-1185">Reference proteome</keyword>
<keyword id="KW-0762">Sugar transport</keyword>
<keyword id="KW-1278">Translocase</keyword>
<keyword id="KW-0813">Transport</keyword>
<comment type="function">
    <text evidence="1">Part of the ABC transporter complex UgpBAEC involved in sn-glycerol-3-phosphate (G3P) import. Responsible for energy coupling to the transport system.</text>
</comment>
<comment type="catalytic activity">
    <reaction evidence="1">
        <text>sn-glycerol 3-phosphate(out) + ATP + H2O = sn-glycerol 3-phosphate(in) + ADP + phosphate + H(+)</text>
        <dbReference type="Rhea" id="RHEA:21668"/>
        <dbReference type="ChEBI" id="CHEBI:15377"/>
        <dbReference type="ChEBI" id="CHEBI:15378"/>
        <dbReference type="ChEBI" id="CHEBI:30616"/>
        <dbReference type="ChEBI" id="CHEBI:43474"/>
        <dbReference type="ChEBI" id="CHEBI:57597"/>
        <dbReference type="ChEBI" id="CHEBI:456216"/>
        <dbReference type="EC" id="7.6.2.10"/>
    </reaction>
</comment>
<comment type="subunit">
    <text evidence="1">The complex is composed of two ATP-binding proteins (UgpC), two transmembrane proteins (UgpA and UgpE) and a solute-binding protein (UgpB).</text>
</comment>
<comment type="subcellular location">
    <subcellularLocation>
        <location evidence="1">Cell inner membrane</location>
        <topology evidence="1">Peripheral membrane protein</topology>
    </subcellularLocation>
</comment>
<comment type="similarity">
    <text evidence="1">Belongs to the ABC transporter superfamily. sn-glycerol-3-phosphate importer (TC 3.A.1.1.3) family.</text>
</comment>
<gene>
    <name evidence="1" type="primary">ugpC</name>
    <name type="ordered locus">BAB2_0582</name>
</gene>
<sequence>MSKIVLDNVRKSYGGNIEVIKGVSLEIADGEFVVLVGPSGCGKSTLLRMIAGLESITSGTISIGERVVNNVEPAERDIAMVFQNYALYPHMTVRENLAYGLKNRKTPKEEIERRIAKAAKALEIEQFLERKPRQLSGGQRQRVAMGRAIVREPAAFLFDEPLSNLDAKLRVQMRVEIKRLQRSLGTTSVYVTHDQMEAMTMADRLVVLNAGHIEQVGTPIELYEKPASTFVATFIGSPSMNLLQSPESAPWQPGRAITLPSGGYTFGVRPEDIRILEEGDQDADGFNAQVRIEAVELVGAESYIHAALSDGKPLIFRVAGRSTHNIDEMVRVGASATDVHIFGADGRRVSD</sequence>
<name>UGPC_BRUA2</name>